<name>PTH_AZOC5</name>
<dbReference type="EC" id="3.1.1.29" evidence="1"/>
<dbReference type="EMBL" id="AP009384">
    <property type="protein sequence ID" value="BAF90146.1"/>
    <property type="molecule type" value="Genomic_DNA"/>
</dbReference>
<dbReference type="RefSeq" id="WP_012172668.1">
    <property type="nucleotide sequence ID" value="NC_009937.1"/>
</dbReference>
<dbReference type="SMR" id="A8HS70"/>
<dbReference type="STRING" id="438753.AZC_4148"/>
<dbReference type="KEGG" id="azc:AZC_4148"/>
<dbReference type="eggNOG" id="COG0193">
    <property type="taxonomic scope" value="Bacteria"/>
</dbReference>
<dbReference type="HOGENOM" id="CLU_062456_1_1_5"/>
<dbReference type="Proteomes" id="UP000000270">
    <property type="component" value="Chromosome"/>
</dbReference>
<dbReference type="GO" id="GO:0005737">
    <property type="term" value="C:cytoplasm"/>
    <property type="evidence" value="ECO:0007669"/>
    <property type="project" value="UniProtKB-SubCell"/>
</dbReference>
<dbReference type="GO" id="GO:0004045">
    <property type="term" value="F:peptidyl-tRNA hydrolase activity"/>
    <property type="evidence" value="ECO:0007669"/>
    <property type="project" value="UniProtKB-UniRule"/>
</dbReference>
<dbReference type="GO" id="GO:0000049">
    <property type="term" value="F:tRNA binding"/>
    <property type="evidence" value="ECO:0007669"/>
    <property type="project" value="UniProtKB-UniRule"/>
</dbReference>
<dbReference type="GO" id="GO:0006515">
    <property type="term" value="P:protein quality control for misfolded or incompletely synthesized proteins"/>
    <property type="evidence" value="ECO:0007669"/>
    <property type="project" value="UniProtKB-UniRule"/>
</dbReference>
<dbReference type="GO" id="GO:0072344">
    <property type="term" value="P:rescue of stalled ribosome"/>
    <property type="evidence" value="ECO:0007669"/>
    <property type="project" value="UniProtKB-UniRule"/>
</dbReference>
<dbReference type="CDD" id="cd00462">
    <property type="entry name" value="PTH"/>
    <property type="match status" value="1"/>
</dbReference>
<dbReference type="FunFam" id="3.40.50.1470:FF:000001">
    <property type="entry name" value="Peptidyl-tRNA hydrolase"/>
    <property type="match status" value="1"/>
</dbReference>
<dbReference type="Gene3D" id="3.40.50.1470">
    <property type="entry name" value="Peptidyl-tRNA hydrolase"/>
    <property type="match status" value="1"/>
</dbReference>
<dbReference type="HAMAP" id="MF_00083">
    <property type="entry name" value="Pept_tRNA_hydro_bact"/>
    <property type="match status" value="1"/>
</dbReference>
<dbReference type="InterPro" id="IPR001328">
    <property type="entry name" value="Pept_tRNA_hydro"/>
</dbReference>
<dbReference type="InterPro" id="IPR018171">
    <property type="entry name" value="Pept_tRNA_hydro_CS"/>
</dbReference>
<dbReference type="InterPro" id="IPR036416">
    <property type="entry name" value="Pept_tRNA_hydro_sf"/>
</dbReference>
<dbReference type="NCBIfam" id="TIGR00447">
    <property type="entry name" value="pth"/>
    <property type="match status" value="1"/>
</dbReference>
<dbReference type="PANTHER" id="PTHR17224">
    <property type="entry name" value="PEPTIDYL-TRNA HYDROLASE"/>
    <property type="match status" value="1"/>
</dbReference>
<dbReference type="PANTHER" id="PTHR17224:SF1">
    <property type="entry name" value="PEPTIDYL-TRNA HYDROLASE"/>
    <property type="match status" value="1"/>
</dbReference>
<dbReference type="Pfam" id="PF01195">
    <property type="entry name" value="Pept_tRNA_hydro"/>
    <property type="match status" value="1"/>
</dbReference>
<dbReference type="SUPFAM" id="SSF53178">
    <property type="entry name" value="Peptidyl-tRNA hydrolase-like"/>
    <property type="match status" value="1"/>
</dbReference>
<dbReference type="PROSITE" id="PS01195">
    <property type="entry name" value="PEPT_TRNA_HYDROL_1"/>
    <property type="match status" value="1"/>
</dbReference>
<dbReference type="PROSITE" id="PS01196">
    <property type="entry name" value="PEPT_TRNA_HYDROL_2"/>
    <property type="match status" value="1"/>
</dbReference>
<feature type="chain" id="PRO_1000071223" description="Peptidyl-tRNA hydrolase">
    <location>
        <begin position="1"/>
        <end position="204"/>
    </location>
</feature>
<feature type="active site" description="Proton acceptor" evidence="1">
    <location>
        <position position="19"/>
    </location>
</feature>
<feature type="binding site" evidence="1">
    <location>
        <position position="14"/>
    </location>
    <ligand>
        <name>tRNA</name>
        <dbReference type="ChEBI" id="CHEBI:17843"/>
    </ligand>
</feature>
<feature type="binding site" evidence="1">
    <location>
        <position position="64"/>
    </location>
    <ligand>
        <name>tRNA</name>
        <dbReference type="ChEBI" id="CHEBI:17843"/>
    </ligand>
</feature>
<feature type="binding site" evidence="1">
    <location>
        <position position="66"/>
    </location>
    <ligand>
        <name>tRNA</name>
        <dbReference type="ChEBI" id="CHEBI:17843"/>
    </ligand>
</feature>
<feature type="binding site" evidence="1">
    <location>
        <position position="112"/>
    </location>
    <ligand>
        <name>tRNA</name>
        <dbReference type="ChEBI" id="CHEBI:17843"/>
    </ligand>
</feature>
<feature type="site" description="Discriminates between blocked and unblocked aminoacyl-tRNA" evidence="1">
    <location>
        <position position="9"/>
    </location>
</feature>
<feature type="site" description="Stabilizes the basic form of H active site to accept a proton" evidence="1">
    <location>
        <position position="91"/>
    </location>
</feature>
<evidence type="ECO:0000255" key="1">
    <source>
        <dbReference type="HAMAP-Rule" id="MF_00083"/>
    </source>
</evidence>
<gene>
    <name evidence="1" type="primary">pth</name>
    <name type="ordered locus">AZC_4148</name>
</gene>
<comment type="function">
    <text evidence="1">Hydrolyzes ribosome-free peptidyl-tRNAs (with 1 or more amino acids incorporated), which drop off the ribosome during protein synthesis, or as a result of ribosome stalling.</text>
</comment>
<comment type="function">
    <text evidence="1">Catalyzes the release of premature peptidyl moieties from peptidyl-tRNA molecules trapped in stalled 50S ribosomal subunits, and thus maintains levels of free tRNAs and 50S ribosomes.</text>
</comment>
<comment type="catalytic activity">
    <reaction evidence="1">
        <text>an N-acyl-L-alpha-aminoacyl-tRNA + H2O = an N-acyl-L-amino acid + a tRNA + H(+)</text>
        <dbReference type="Rhea" id="RHEA:54448"/>
        <dbReference type="Rhea" id="RHEA-COMP:10123"/>
        <dbReference type="Rhea" id="RHEA-COMP:13883"/>
        <dbReference type="ChEBI" id="CHEBI:15377"/>
        <dbReference type="ChEBI" id="CHEBI:15378"/>
        <dbReference type="ChEBI" id="CHEBI:59874"/>
        <dbReference type="ChEBI" id="CHEBI:78442"/>
        <dbReference type="ChEBI" id="CHEBI:138191"/>
        <dbReference type="EC" id="3.1.1.29"/>
    </reaction>
</comment>
<comment type="subunit">
    <text evidence="1">Monomer.</text>
</comment>
<comment type="subcellular location">
    <subcellularLocation>
        <location evidence="1">Cytoplasm</location>
    </subcellularLocation>
</comment>
<comment type="similarity">
    <text evidence="1">Belongs to the PTH family.</text>
</comment>
<sequence>MFLFAGLGNPGPKYAGNRHNIGFMAVDAIVRRHRLSPWRRRFQGAVSEGEIAGEKVLALLPETFMNESGRAVAEAAKFYKIPLENIFVFHDELDLPPAKIRVKKGGGNAGHNGLRSITAQCGNDYWRVRLGIGHPGDKSLVHSYVLNDFGKAEREWVEAVNTACADFAPALIGGKAEDFQNRAHLFLEAQGFTDVKPLGGARAS</sequence>
<protein>
    <recommendedName>
        <fullName evidence="1">Peptidyl-tRNA hydrolase</fullName>
        <shortName evidence="1">Pth</shortName>
        <ecNumber evidence="1">3.1.1.29</ecNumber>
    </recommendedName>
</protein>
<organism>
    <name type="scientific">Azorhizobium caulinodans (strain ATCC 43989 / DSM 5975 / JCM 20966 / LMG 6465 / NBRC 14845 / NCIMB 13405 / ORS 571)</name>
    <dbReference type="NCBI Taxonomy" id="438753"/>
    <lineage>
        <taxon>Bacteria</taxon>
        <taxon>Pseudomonadati</taxon>
        <taxon>Pseudomonadota</taxon>
        <taxon>Alphaproteobacteria</taxon>
        <taxon>Hyphomicrobiales</taxon>
        <taxon>Xanthobacteraceae</taxon>
        <taxon>Azorhizobium</taxon>
    </lineage>
</organism>
<proteinExistence type="inferred from homology"/>
<keyword id="KW-0963">Cytoplasm</keyword>
<keyword id="KW-0378">Hydrolase</keyword>
<keyword id="KW-1185">Reference proteome</keyword>
<keyword id="KW-0694">RNA-binding</keyword>
<keyword id="KW-0820">tRNA-binding</keyword>
<accession>A8HS70</accession>
<reference key="1">
    <citation type="submission" date="2007-04" db="EMBL/GenBank/DDBJ databases">
        <title>Complete genome sequence of the nitrogen-fixing bacterium Azorhizobium caulinodans ORS571.</title>
        <authorList>
            <person name="Lee K.B."/>
            <person name="Backer P.D."/>
            <person name="Aono T."/>
            <person name="Liu C.T."/>
            <person name="Suzuki S."/>
            <person name="Suzuki T."/>
            <person name="Kaneko T."/>
            <person name="Yamada M."/>
            <person name="Tabata S."/>
            <person name="Kupfer D.M."/>
            <person name="Najar F.Z."/>
            <person name="Wiley G.B."/>
            <person name="Roe B."/>
            <person name="Binnewies T."/>
            <person name="Ussery D."/>
            <person name="Vereecke D."/>
            <person name="Gevers D."/>
            <person name="Holsters M."/>
            <person name="Oyaizu H."/>
        </authorList>
    </citation>
    <scope>NUCLEOTIDE SEQUENCE [LARGE SCALE GENOMIC DNA]</scope>
    <source>
        <strain>ATCC 43989 / DSM 5975 / JCM 20966 / LMG 6465 / NBRC 14845 / NCIMB 13405 / ORS 571</strain>
    </source>
</reference>